<name>YIDD_DESAH</name>
<proteinExistence type="inferred from homology"/>
<organism>
    <name type="scientific">Desulforapulum autotrophicum (strain ATCC 43914 / DSM 3382 / VKM B-1955 / HRM2)</name>
    <name type="common">Desulfobacterium autotrophicum</name>
    <dbReference type="NCBI Taxonomy" id="177437"/>
    <lineage>
        <taxon>Bacteria</taxon>
        <taxon>Pseudomonadati</taxon>
        <taxon>Thermodesulfobacteriota</taxon>
        <taxon>Desulfobacteria</taxon>
        <taxon>Desulfobacterales</taxon>
        <taxon>Desulfobacteraceae</taxon>
        <taxon>Desulforapulum</taxon>
    </lineage>
</organism>
<dbReference type="EMBL" id="CP001087">
    <property type="protein sequence ID" value="ACN13782.1"/>
    <property type="molecule type" value="Genomic_DNA"/>
</dbReference>
<dbReference type="RefSeq" id="WP_012663030.1">
    <property type="nucleotide sequence ID" value="NC_012108.1"/>
</dbReference>
<dbReference type="STRING" id="177437.HRM2_06680"/>
<dbReference type="KEGG" id="dat:HRM2_06680"/>
<dbReference type="eggNOG" id="COG0759">
    <property type="taxonomic scope" value="Bacteria"/>
</dbReference>
<dbReference type="HOGENOM" id="CLU_144811_6_0_7"/>
<dbReference type="OrthoDB" id="9801753at2"/>
<dbReference type="Proteomes" id="UP000000442">
    <property type="component" value="Chromosome"/>
</dbReference>
<dbReference type="GO" id="GO:0005886">
    <property type="term" value="C:plasma membrane"/>
    <property type="evidence" value="ECO:0007669"/>
    <property type="project" value="UniProtKB-SubCell"/>
</dbReference>
<dbReference type="HAMAP" id="MF_00386">
    <property type="entry name" value="UPF0161_YidD"/>
    <property type="match status" value="1"/>
</dbReference>
<dbReference type="InterPro" id="IPR002696">
    <property type="entry name" value="Membr_insert_effic_factor_YidD"/>
</dbReference>
<dbReference type="NCBIfam" id="TIGR00278">
    <property type="entry name" value="membrane protein insertion efficiency factor YidD"/>
    <property type="match status" value="1"/>
</dbReference>
<dbReference type="PANTHER" id="PTHR33383">
    <property type="entry name" value="MEMBRANE PROTEIN INSERTION EFFICIENCY FACTOR-RELATED"/>
    <property type="match status" value="1"/>
</dbReference>
<dbReference type="PANTHER" id="PTHR33383:SF1">
    <property type="entry name" value="MEMBRANE PROTEIN INSERTION EFFICIENCY FACTOR-RELATED"/>
    <property type="match status" value="1"/>
</dbReference>
<dbReference type="Pfam" id="PF01809">
    <property type="entry name" value="YidD"/>
    <property type="match status" value="1"/>
</dbReference>
<dbReference type="SMART" id="SM01234">
    <property type="entry name" value="Haemolytic"/>
    <property type="match status" value="1"/>
</dbReference>
<sequence>MVKRSILLLIKVYQYFISPLTGPTCRFYPTCSQYAFEAVMIHGSLKGSCLAVRRILKCHPFHPGGYDPVP</sequence>
<accession>C0QIZ2</accession>
<gene>
    <name type="ordered locus">HRM2_06680</name>
</gene>
<protein>
    <recommendedName>
        <fullName evidence="1">Putative membrane protein insertion efficiency factor</fullName>
    </recommendedName>
</protein>
<keyword id="KW-0997">Cell inner membrane</keyword>
<keyword id="KW-1003">Cell membrane</keyword>
<keyword id="KW-0472">Membrane</keyword>
<keyword id="KW-1185">Reference proteome</keyword>
<reference key="1">
    <citation type="journal article" date="2009" name="Environ. Microbiol.">
        <title>Genome sequence of Desulfobacterium autotrophicum HRM2, a marine sulfate reducer oxidizing organic carbon completely to carbon dioxide.</title>
        <authorList>
            <person name="Strittmatter A.W."/>
            <person name="Liesegang H."/>
            <person name="Rabus R."/>
            <person name="Decker I."/>
            <person name="Amann J."/>
            <person name="Andres S."/>
            <person name="Henne A."/>
            <person name="Fricke W.F."/>
            <person name="Martinez-Arias R."/>
            <person name="Bartels D."/>
            <person name="Goesmann A."/>
            <person name="Krause L."/>
            <person name="Puehler A."/>
            <person name="Klenk H.P."/>
            <person name="Richter M."/>
            <person name="Schuler M."/>
            <person name="Gloeckner F.O."/>
            <person name="Meyerdierks A."/>
            <person name="Gottschalk G."/>
            <person name="Amann R."/>
        </authorList>
    </citation>
    <scope>NUCLEOTIDE SEQUENCE [LARGE SCALE GENOMIC DNA]</scope>
    <source>
        <strain>ATCC 43914 / DSM 3382 / VKM B-1955 / HRM2</strain>
    </source>
</reference>
<comment type="function">
    <text evidence="1">Could be involved in insertion of integral membrane proteins into the membrane.</text>
</comment>
<comment type="subcellular location">
    <subcellularLocation>
        <location evidence="1">Cell inner membrane</location>
        <topology evidence="1">Peripheral membrane protein</topology>
        <orientation evidence="1">Cytoplasmic side</orientation>
    </subcellularLocation>
</comment>
<comment type="similarity">
    <text evidence="1">Belongs to the UPF0161 family.</text>
</comment>
<feature type="chain" id="PRO_1000205780" description="Putative membrane protein insertion efficiency factor">
    <location>
        <begin position="1"/>
        <end position="70"/>
    </location>
</feature>
<evidence type="ECO:0000255" key="1">
    <source>
        <dbReference type="HAMAP-Rule" id="MF_00386"/>
    </source>
</evidence>